<accession>P23897</accession>
<keyword id="KW-1003">Cell membrane</keyword>
<keyword id="KW-0141">cGMP biosynthesis</keyword>
<keyword id="KW-0256">Endoplasmic reticulum</keyword>
<keyword id="KW-0325">Glycoprotein</keyword>
<keyword id="KW-0342">GTP-binding</keyword>
<keyword id="KW-0456">Lyase</keyword>
<keyword id="KW-0472">Membrane</keyword>
<keyword id="KW-0547">Nucleotide-binding</keyword>
<keyword id="KW-0675">Receptor</keyword>
<keyword id="KW-1185">Reference proteome</keyword>
<keyword id="KW-0732">Signal</keyword>
<keyword id="KW-0812">Transmembrane</keyword>
<keyword id="KW-1133">Transmembrane helix</keyword>
<reference key="1">
    <citation type="journal article" date="1990" name="Cell">
        <title>Guanylyl cyclase is a heat-stable enterotoxin receptor.</title>
        <authorList>
            <person name="Schulz S."/>
            <person name="Green C.K."/>
            <person name="Yuen P.S.T."/>
            <person name="Garbers D.L."/>
        </authorList>
    </citation>
    <scope>NUCLEOTIDE SEQUENCE [MRNA]</scope>
    <scope>FUNCTION</scope>
    <scope>CATALYTIC ACTIVITY</scope>
    <scope>TISSUE SPECIFICITY</scope>
    <source>
        <strain>Sprague-Dawley</strain>
        <tissue>Small intestine</tissue>
    </source>
</reference>
<evidence type="ECO:0000250" key="1">
    <source>
        <dbReference type="UniProtKB" id="P25092"/>
    </source>
</evidence>
<evidence type="ECO:0000255" key="2"/>
<evidence type="ECO:0000255" key="3">
    <source>
        <dbReference type="PROSITE-ProRule" id="PRU00099"/>
    </source>
</evidence>
<evidence type="ECO:0000255" key="4">
    <source>
        <dbReference type="PROSITE-ProRule" id="PRU00159"/>
    </source>
</evidence>
<evidence type="ECO:0000269" key="5">
    <source>
    </source>
</evidence>
<evidence type="ECO:0000305" key="6"/>
<evidence type="ECO:0000305" key="7">
    <source>
    </source>
</evidence>
<organism>
    <name type="scientific">Rattus norvegicus</name>
    <name type="common">Rat</name>
    <dbReference type="NCBI Taxonomy" id="10116"/>
    <lineage>
        <taxon>Eukaryota</taxon>
        <taxon>Metazoa</taxon>
        <taxon>Chordata</taxon>
        <taxon>Craniata</taxon>
        <taxon>Vertebrata</taxon>
        <taxon>Euteleostomi</taxon>
        <taxon>Mammalia</taxon>
        <taxon>Eutheria</taxon>
        <taxon>Euarchontoglires</taxon>
        <taxon>Glires</taxon>
        <taxon>Rodentia</taxon>
        <taxon>Myomorpha</taxon>
        <taxon>Muroidea</taxon>
        <taxon>Muridae</taxon>
        <taxon>Murinae</taxon>
        <taxon>Rattus</taxon>
    </lineage>
</organism>
<feature type="signal peptide" evidence="2">
    <location>
        <begin position="1"/>
        <end position="22"/>
    </location>
</feature>
<feature type="chain" id="PRO_0000012378" description="Guanylyl cyclase C">
    <location>
        <begin position="23"/>
        <end position="1072"/>
    </location>
</feature>
<feature type="topological domain" description="Extracellular" evidence="2">
    <location>
        <begin position="23"/>
        <end position="429"/>
    </location>
</feature>
<feature type="transmembrane region" description="Helical" evidence="2">
    <location>
        <begin position="430"/>
        <end position="453"/>
    </location>
</feature>
<feature type="topological domain" description="Cytoplasmic" evidence="2">
    <location>
        <begin position="454"/>
        <end position="1072"/>
    </location>
</feature>
<feature type="domain" description="Protein kinase" evidence="4">
    <location>
        <begin position="488"/>
        <end position="748"/>
    </location>
</feature>
<feature type="domain" description="Guanylate cyclase" evidence="3">
    <location>
        <begin position="823"/>
        <end position="953"/>
    </location>
</feature>
<feature type="glycosylation site" description="N-linked (GlcNAc...) asparagine" evidence="2">
    <location>
        <position position="31"/>
    </location>
</feature>
<feature type="glycosylation site" description="N-linked (GlcNAc...) asparagine" evidence="2">
    <location>
        <position position="74"/>
    </location>
</feature>
<feature type="glycosylation site" description="N-linked (GlcNAc...) asparagine" evidence="2">
    <location>
        <position position="78"/>
    </location>
</feature>
<feature type="glycosylation site" description="N-linked (GlcNAc...) asparagine" evidence="2">
    <location>
        <position position="187"/>
    </location>
</feature>
<feature type="glycosylation site" description="N-linked (GlcNAc...) asparagine" evidence="2">
    <location>
        <position position="194"/>
    </location>
</feature>
<feature type="glycosylation site" description="N-linked (GlcNAc...) asparagine" evidence="2">
    <location>
        <position position="306"/>
    </location>
</feature>
<feature type="glycosylation site" description="N-linked (GlcNAc...) asparagine" evidence="2">
    <location>
        <position position="401"/>
    </location>
</feature>
<sequence>MTSLLGLAVRLLLFQPTLMFWASQVRQKCHNGTYEISVLMMDNSAYKEPLQNLRDAVEEGLDIVRKRLREAELNVTVNATFIYSDGLIHKSGDCRSSTCEGLDLLREITRDRKMGCVLMGPSCTYSTFQMYLDTELNYPMISAGSFGLSCDYKETLTRILPPARKLMYFLVDFWKVNNAPFKTFSWNSSYVYKNGSEPEDCFWYLNALEAGVSYFSEVLSFKDVLRRSEQFQEILMGRNRKSNVIVMCGTPETFYNVKGDLKVADDTVVILVDLFSNHYFEDDTRAPEYMDNVLVLTLPPEKFIANASVSGRFPSERSDFSLAYLEGTLLFGHMLQTFLENGESVTTPKFARAFRNLTFQGLEGPVTLDDSGDIDNIMCLLYVSLDTRKYKVLMAYDTHKNQTIPVATSPNFIWKNHRLPNDVPGLGPQILMIAVFTLTGIVVVLLLIALLVLRKYRRDHELRQKKWSHIPSENIFPLETNETNHVSLKIDDDRRRDTIQRVRQCKYDKKKVILKDLKHCDGNFSEKQKIELNKLLQSDYYNLTKFYGTVKLDTRIFGVVEYCERGSLREVLNDTISYPDGTFMDWEFKISVLNDIAKGMSYLHSSKIEVHGRLKSTNCVVDSRMVVKITDFGCNSILPPKKDLWTAPEHLRQATISQKGDVYSFSIIAQEIILRKETFYTLSCRDQNEKIFRVENSYGTKPFRPDLFLETADEKELEVYLLVKSCWEEDPEKRPDFKKIESTLAKIFGLFHDQKNESYMDTLIRRLQLYSRNLEHLVEERTQLYKAERDRADHLNFMLLPRLVVKSLKEKGIVEPELYEEVTIYFSDIVGFTTICKYSTPMEVVDMLNDIYKSFDQIVDHHDVYKVETIGDAYVVASGLPMRNGNRHAVDISKMALDILSFMGTFELEHLPGLPVWIRIGVHSGPCAAGVVGIKMPRYCLFGDTVNTASRMESTGLPLRIHMSSSTIAILRRTDCQFLYEVRGETYLKGRGTETTYWLTGMKDQEYNLPTPPTVENQQRLQTEFSDMIVSALQKRQASGVKSRRPTRVASYKKGFLEYMQLNNSDHDSTYF</sequence>
<protein>
    <recommendedName>
        <fullName>Guanylyl cyclase C</fullName>
        <shortName>GC-C</shortName>
        <ecNumber evidence="5">4.6.1.2</ecNumber>
    </recommendedName>
    <alternativeName>
        <fullName>Heat-stable enterotoxin receptor</fullName>
        <shortName>STA receptor</shortName>
    </alternativeName>
    <alternativeName>
        <fullName>Intestinal guanylate cyclase</fullName>
    </alternativeName>
</protein>
<gene>
    <name type="primary">Gucy2c</name>
    <name type="synonym">Guc2c</name>
</gene>
<dbReference type="EC" id="4.6.1.2" evidence="5"/>
<dbReference type="EMBL" id="M55636">
    <property type="protein sequence ID" value="AAA41201.1"/>
    <property type="molecule type" value="mRNA"/>
</dbReference>
<dbReference type="PIR" id="A36292">
    <property type="entry name" value="OYRTHX"/>
</dbReference>
<dbReference type="RefSeq" id="NP_037302.1">
    <property type="nucleotide sequence ID" value="NM_013170.1"/>
</dbReference>
<dbReference type="SMR" id="P23897"/>
<dbReference type="FunCoup" id="P23897">
    <property type="interactions" value="4"/>
</dbReference>
<dbReference type="STRING" id="10116.ENSRNOP00000012212"/>
<dbReference type="DrugCentral" id="P23897"/>
<dbReference type="GuidetoPHARMACOLOGY" id="1750"/>
<dbReference type="GlyCosmos" id="P23897">
    <property type="glycosylation" value="7 sites, No reported glycans"/>
</dbReference>
<dbReference type="GlyGen" id="P23897">
    <property type="glycosylation" value="7 sites"/>
</dbReference>
<dbReference type="PhosphoSitePlus" id="P23897"/>
<dbReference type="PaxDb" id="10116-ENSRNOP00000012212"/>
<dbReference type="Ensembl" id="ENSRNOT00000012212.6">
    <property type="protein sequence ID" value="ENSRNOP00000012212.5"/>
    <property type="gene ID" value="ENSRNOG00000009031.6"/>
</dbReference>
<dbReference type="GeneID" id="25711"/>
<dbReference type="KEGG" id="rno:25711"/>
<dbReference type="UCSC" id="RGD:2771">
    <property type="organism name" value="rat"/>
</dbReference>
<dbReference type="AGR" id="RGD:2771"/>
<dbReference type="CTD" id="2984"/>
<dbReference type="RGD" id="2771">
    <property type="gene designation" value="Gucy2c"/>
</dbReference>
<dbReference type="eggNOG" id="KOG1023">
    <property type="taxonomic scope" value="Eukaryota"/>
</dbReference>
<dbReference type="GeneTree" id="ENSGT00940000155955"/>
<dbReference type="HOGENOM" id="CLU_001072_1_3_1"/>
<dbReference type="InParanoid" id="P23897"/>
<dbReference type="OMA" id="KFAHAFK"/>
<dbReference type="OrthoDB" id="25069at9989"/>
<dbReference type="PhylomeDB" id="P23897"/>
<dbReference type="Reactome" id="R-RNO-8935690">
    <property type="pathway name" value="Digestion"/>
</dbReference>
<dbReference type="PRO" id="PR:P23897"/>
<dbReference type="Proteomes" id="UP000002494">
    <property type="component" value="Chromosome 4"/>
</dbReference>
<dbReference type="Bgee" id="ENSRNOG00000009031">
    <property type="expression patterns" value="Expressed in jejunum and 9 other cell types or tissues"/>
</dbReference>
<dbReference type="GO" id="GO:0005789">
    <property type="term" value="C:endoplasmic reticulum membrane"/>
    <property type="evidence" value="ECO:0007669"/>
    <property type="project" value="UniProtKB-SubCell"/>
</dbReference>
<dbReference type="GO" id="GO:0005886">
    <property type="term" value="C:plasma membrane"/>
    <property type="evidence" value="ECO:0000318"/>
    <property type="project" value="GO_Central"/>
</dbReference>
<dbReference type="GO" id="GO:0005524">
    <property type="term" value="F:ATP binding"/>
    <property type="evidence" value="ECO:0007669"/>
    <property type="project" value="InterPro"/>
</dbReference>
<dbReference type="GO" id="GO:0005525">
    <property type="term" value="F:GTP binding"/>
    <property type="evidence" value="ECO:0007669"/>
    <property type="project" value="UniProtKB-KW"/>
</dbReference>
<dbReference type="GO" id="GO:0004383">
    <property type="term" value="F:guanylate cyclase activity"/>
    <property type="evidence" value="ECO:0000314"/>
    <property type="project" value="RGD"/>
</dbReference>
<dbReference type="GO" id="GO:0001653">
    <property type="term" value="F:peptide receptor activity"/>
    <property type="evidence" value="ECO:0000318"/>
    <property type="project" value="GO_Central"/>
</dbReference>
<dbReference type="GO" id="GO:0004672">
    <property type="term" value="F:protein kinase activity"/>
    <property type="evidence" value="ECO:0007669"/>
    <property type="project" value="InterPro"/>
</dbReference>
<dbReference type="GO" id="GO:0015643">
    <property type="term" value="F:toxic substance binding"/>
    <property type="evidence" value="ECO:0000314"/>
    <property type="project" value="RGD"/>
</dbReference>
<dbReference type="GO" id="GO:0006182">
    <property type="term" value="P:cGMP biosynthetic process"/>
    <property type="evidence" value="ECO:0000318"/>
    <property type="project" value="GO_Central"/>
</dbReference>
<dbReference type="GO" id="GO:0035556">
    <property type="term" value="P:intracellular signal transduction"/>
    <property type="evidence" value="ECO:0007669"/>
    <property type="project" value="InterPro"/>
</dbReference>
<dbReference type="GO" id="GO:0007168">
    <property type="term" value="P:receptor guanylyl cyclase signaling pathway"/>
    <property type="evidence" value="ECO:0000318"/>
    <property type="project" value="GO_Central"/>
</dbReference>
<dbReference type="GO" id="GO:0042127">
    <property type="term" value="P:regulation of cell population proliferation"/>
    <property type="evidence" value="ECO:0000266"/>
    <property type="project" value="RGD"/>
</dbReference>
<dbReference type="GO" id="GO:0009636">
    <property type="term" value="P:response to toxic substance"/>
    <property type="evidence" value="ECO:0000266"/>
    <property type="project" value="RGD"/>
</dbReference>
<dbReference type="CDD" id="cd07302">
    <property type="entry name" value="CHD"/>
    <property type="match status" value="1"/>
</dbReference>
<dbReference type="FunFam" id="1.10.510.10:FF:000364">
    <property type="entry name" value="Guanylate cyclase"/>
    <property type="match status" value="1"/>
</dbReference>
<dbReference type="FunFam" id="3.30.70.1230:FF:000015">
    <property type="entry name" value="Guanylate cyclase"/>
    <property type="match status" value="1"/>
</dbReference>
<dbReference type="FunFam" id="3.40.50.2300:FF:000185">
    <property type="entry name" value="Guanylate cyclase"/>
    <property type="match status" value="1"/>
</dbReference>
<dbReference type="Gene3D" id="3.40.50.2300">
    <property type="match status" value="1"/>
</dbReference>
<dbReference type="Gene3D" id="3.30.70.1230">
    <property type="entry name" value="Nucleotide cyclase"/>
    <property type="match status" value="1"/>
</dbReference>
<dbReference type="Gene3D" id="1.10.510.10">
    <property type="entry name" value="Transferase(Phosphotransferase) domain 1"/>
    <property type="match status" value="1"/>
</dbReference>
<dbReference type="InterPro" id="IPR001054">
    <property type="entry name" value="A/G_cyclase"/>
</dbReference>
<dbReference type="InterPro" id="IPR018297">
    <property type="entry name" value="A/G_cyclase_CS"/>
</dbReference>
<dbReference type="InterPro" id="IPR001828">
    <property type="entry name" value="ANF_lig-bd_rcpt"/>
</dbReference>
<dbReference type="InterPro" id="IPR050401">
    <property type="entry name" value="Cyclic_nucleotide_synthase"/>
</dbReference>
<dbReference type="InterPro" id="IPR011009">
    <property type="entry name" value="Kinase-like_dom_sf"/>
</dbReference>
<dbReference type="InterPro" id="IPR029787">
    <property type="entry name" value="Nucleotide_cyclase"/>
</dbReference>
<dbReference type="InterPro" id="IPR028082">
    <property type="entry name" value="Peripla_BP_I"/>
</dbReference>
<dbReference type="InterPro" id="IPR000719">
    <property type="entry name" value="Prot_kinase_dom"/>
</dbReference>
<dbReference type="InterPro" id="IPR001245">
    <property type="entry name" value="Ser-Thr/Tyr_kinase_cat_dom"/>
</dbReference>
<dbReference type="PANTHER" id="PTHR11920">
    <property type="entry name" value="GUANYLYL CYCLASE"/>
    <property type="match status" value="1"/>
</dbReference>
<dbReference type="PANTHER" id="PTHR11920:SF347">
    <property type="entry name" value="GUANYLYL CYCLASE C"/>
    <property type="match status" value="1"/>
</dbReference>
<dbReference type="Pfam" id="PF01094">
    <property type="entry name" value="ANF_receptor"/>
    <property type="match status" value="1"/>
</dbReference>
<dbReference type="Pfam" id="PF00211">
    <property type="entry name" value="Guanylate_cyc"/>
    <property type="match status" value="1"/>
</dbReference>
<dbReference type="Pfam" id="PF07714">
    <property type="entry name" value="PK_Tyr_Ser-Thr"/>
    <property type="match status" value="1"/>
</dbReference>
<dbReference type="SMART" id="SM00044">
    <property type="entry name" value="CYCc"/>
    <property type="match status" value="1"/>
</dbReference>
<dbReference type="SUPFAM" id="SSF55073">
    <property type="entry name" value="Nucleotide cyclase"/>
    <property type="match status" value="1"/>
</dbReference>
<dbReference type="SUPFAM" id="SSF53822">
    <property type="entry name" value="Periplasmic binding protein-like I"/>
    <property type="match status" value="1"/>
</dbReference>
<dbReference type="SUPFAM" id="SSF56112">
    <property type="entry name" value="Protein kinase-like (PK-like)"/>
    <property type="match status" value="1"/>
</dbReference>
<dbReference type="PROSITE" id="PS00452">
    <property type="entry name" value="GUANYLATE_CYCLASE_1"/>
    <property type="match status" value="1"/>
</dbReference>
<dbReference type="PROSITE" id="PS50125">
    <property type="entry name" value="GUANYLATE_CYCLASE_2"/>
    <property type="match status" value="1"/>
</dbReference>
<dbReference type="PROSITE" id="PS50011">
    <property type="entry name" value="PROTEIN_KINASE_DOM"/>
    <property type="match status" value="1"/>
</dbReference>
<proteinExistence type="evidence at protein level"/>
<name>GUC2C_RAT</name>
<comment type="function">
    <text evidence="5">Guanylyl cyclase that catalyzes synthesis of cyclic GMP (cGMP) from GTP (PubMed:1701694). Receptor for the E.coli heat-stable enterotoxin; E.coli enterotoxin markedly stimulates the accumulation of cGMP in mammalian cells expressing GUCY2C (PubMed:1701694).</text>
</comment>
<comment type="catalytic activity">
    <reaction evidence="5">
        <text>GTP = 3',5'-cyclic GMP + diphosphate</text>
        <dbReference type="Rhea" id="RHEA:13665"/>
        <dbReference type="ChEBI" id="CHEBI:33019"/>
        <dbReference type="ChEBI" id="CHEBI:37565"/>
        <dbReference type="ChEBI" id="CHEBI:57746"/>
        <dbReference type="EC" id="4.6.1.2"/>
    </reaction>
    <physiologicalReaction direction="left-to-right" evidence="7">
        <dbReference type="Rhea" id="RHEA:13666"/>
    </physiologicalReaction>
</comment>
<comment type="subunit">
    <text evidence="1">Homotrimer. Interacts via its C-terminal region with PDZK2. Interacts with the lectin chaperone VIP36.</text>
</comment>
<comment type="subcellular location">
    <subcellularLocation>
        <location evidence="1">Cell membrane</location>
        <topology evidence="1">Single-pass type I membrane protein</topology>
    </subcellularLocation>
    <subcellularLocation>
        <location evidence="1">Endoplasmic reticulum membrane</location>
        <topology evidence="1">Single-pass type I membrane protein</topology>
    </subcellularLocation>
    <text evidence="1">The 145 kDa plasma membrane form of GUCY2C contains sialic acid and galactose residues, while a differencially glycosylated 130 Kda form is a high mannose form that is resident in the endoplasmic reticulum and may serve as the precursor for the cell surface form.</text>
</comment>
<comment type="domain">
    <text evidence="6">The protein kinase domain is predicted to be catalytically inactive.</text>
</comment>
<comment type="PTM">
    <text evidence="1">Glycosylation at Asn-74 and/or Asn-78 is required for interaction with VIP36 while glycosylation at Asn-401 modulates ligand-mediated GC-C activation.</text>
</comment>
<comment type="similarity">
    <text evidence="3">Belongs to the adenylyl cyclase class-4/guanylyl cyclase family.</text>
</comment>